<organism>
    <name type="scientific">Stachybotrys chlorohalonatus (strain IBT 40285)</name>
    <dbReference type="NCBI Taxonomy" id="1283841"/>
    <lineage>
        <taxon>Eukaryota</taxon>
        <taxon>Fungi</taxon>
        <taxon>Dikarya</taxon>
        <taxon>Ascomycota</taxon>
        <taxon>Pezizomycotina</taxon>
        <taxon>Sordariomycetes</taxon>
        <taxon>Hypocreomycetidae</taxon>
        <taxon>Hypocreales</taxon>
        <taxon>Stachybotryaceae</taxon>
        <taxon>Stachybotrys</taxon>
    </lineage>
</organism>
<feature type="chain" id="PRO_0000442389" description="Polyketide transferase ATR5">
    <location>
        <begin position="1"/>
        <end position="297"/>
    </location>
</feature>
<feature type="region of interest" description="Abhydrolase domain" evidence="2">
    <location>
        <begin position="49"/>
        <end position="272"/>
    </location>
</feature>
<protein>
    <recommendedName>
        <fullName evidence="4">Polyketide transferase ATR5</fullName>
        <ecNumber evidence="4">2.3.-.-</ecNumber>
    </recommendedName>
    <alternativeName>
        <fullName evidence="3">Core atranone cluster (CAC) protein 5</fullName>
    </alternativeName>
</protein>
<keyword id="KW-1185">Reference proteome</keyword>
<keyword id="KW-0808">Transferase</keyword>
<comment type="function">
    <text evidence="1 5">Polyketide transferase; part of the core atranone cluster (CAC) which products are predicted to catalyze most or all steps of atranone synthesis, starting from geranylgeranyl pyrophosphate (GGPP) (PubMed:25015739). The initial cyclization of GGPP to dolabellane is probably performed by the terpene cyclase ATR13 (PubMed:25015739). The Baeyer-Villiger oxidation near the end of the atranone synthesis, which converts atranones D and E to atranones F and G is predicted to be catalyzed by the monooxygenase ATR8 (PubMed:25015739). Of the CAC's other predicted gene products, the reducing PKS ATR6 might synthesize a polyketide chain (PubMed:25015739). This polyketide is probably transferred onto the atranone backbone by the polyketide transferase ATR5 (By similarity). Other predicted CAC products include 4 oxygenases (ATR2, ATR3, ATR4, and ATR14), 3 short-chain reductases (ATR7, ATR9, and ATR10), and a methyltransferase (ATR12) (PubMed:25015739). These may all be involved in the various steps of atranone biosynthesis, although their specific roles must await experimental determination (PubMed:25015739).</text>
</comment>
<comment type="pathway">
    <text evidence="5">Mycotoxin biosynthesis.</text>
</comment>
<comment type="similarity">
    <text evidence="4">Belongs to the polyketide transferase af380 family.</text>
</comment>
<reference key="1">
    <citation type="journal article" date="2014" name="BMC Genomics">
        <title>Comparative genome sequencing reveals chemotype-specific gene clusters in the toxigenic black mold Stachybotrys.</title>
        <authorList>
            <person name="Semeiks J."/>
            <person name="Borek D."/>
            <person name="Otwinowski Z."/>
            <person name="Grishin N.V."/>
        </authorList>
    </citation>
    <scope>NUCLEOTIDE SEQUENCE [LARGE SCALE GENOMIC DNA]</scope>
    <scope>IDENTIFICATION</scope>
    <scope>FUNCTION</scope>
    <source>
        <strain>IBT 40285</strain>
    </source>
</reference>
<sequence length="297" mass="33451">MAVMTREDVEFRTMDGLTLRGWLYPSGMRGPALVMTQGFNASKEYLLADVAVWFQKRGVTSLLVDIRTTGLSDGEPRNDIDLDKQVEDCHDAVSFLSRHPSVDPEMIVYWGYSLGAVISLCAAALDKRAAAVIATAPNTDFIFDPVKRAATLSLAMRDRLSRLAGNPPLYLKIIGEDGQNPAGWYLGEERRSPEELDALFNSSNIMNQVTIQSYYRLLRWQPFGLMPSVSPTPVMIVTPSDDDLSKPENQRKLFDIFQEPKEFVLAENKGHMNCISGEDGEQFLQKQLEFMKRMLKF</sequence>
<name>ATR5_STAC4</name>
<proteinExistence type="inferred from homology"/>
<accession>A0A084R1K6</accession>
<gene>
    <name evidence="3" type="primary">ATR5</name>
    <name type="ORF">S40285_03330</name>
</gene>
<evidence type="ECO:0000250" key="1">
    <source>
        <dbReference type="UniProtKB" id="Q4WAY4"/>
    </source>
</evidence>
<evidence type="ECO:0000255" key="2"/>
<evidence type="ECO:0000303" key="3">
    <source>
    </source>
</evidence>
<evidence type="ECO:0000305" key="4"/>
<evidence type="ECO:0000305" key="5">
    <source>
    </source>
</evidence>
<dbReference type="EC" id="2.3.-.-" evidence="4"/>
<dbReference type="EMBL" id="KL659308">
    <property type="protein sequence ID" value="KFA70091.1"/>
    <property type="molecule type" value="Genomic_DNA"/>
</dbReference>
<dbReference type="SMR" id="A0A084R1K6"/>
<dbReference type="STRING" id="1283841.A0A084R1K6"/>
<dbReference type="ESTHER" id="stac4-atr5">
    <property type="family name" value="Thiohydrolase"/>
</dbReference>
<dbReference type="HOGENOM" id="CLU_048587_1_1_1"/>
<dbReference type="InParanoid" id="A0A084R1K6"/>
<dbReference type="OMA" id="FMARHPM"/>
<dbReference type="OrthoDB" id="2498029at2759"/>
<dbReference type="Proteomes" id="UP000028524">
    <property type="component" value="Unassembled WGS sequence"/>
</dbReference>
<dbReference type="GO" id="GO:0016740">
    <property type="term" value="F:transferase activity"/>
    <property type="evidence" value="ECO:0007669"/>
    <property type="project" value="UniProtKB-KW"/>
</dbReference>
<dbReference type="Gene3D" id="1.10.10.800">
    <property type="match status" value="1"/>
</dbReference>
<dbReference type="Gene3D" id="3.40.50.1820">
    <property type="entry name" value="alpha/beta hydrolase"/>
    <property type="match status" value="1"/>
</dbReference>
<dbReference type="InterPro" id="IPR029058">
    <property type="entry name" value="AB_hydrolase_fold"/>
</dbReference>
<dbReference type="InterPro" id="IPR022742">
    <property type="entry name" value="Hydrolase_4"/>
</dbReference>
<dbReference type="InterPro" id="IPR051411">
    <property type="entry name" value="Polyketide_trans_af380"/>
</dbReference>
<dbReference type="PANTHER" id="PTHR47751:SF2">
    <property type="entry name" value="DLTD N-TERMINAL DOMAIN PROTEIN (AFU_ORTHOLOGUE AFUA_8G00380)-RELATED"/>
    <property type="match status" value="1"/>
</dbReference>
<dbReference type="PANTHER" id="PTHR47751">
    <property type="entry name" value="SUPERFAMILY HYDROLASE, PUTATIVE (AFU_ORTHOLOGUE AFUA_2G16580)-RELATED"/>
    <property type="match status" value="1"/>
</dbReference>
<dbReference type="Pfam" id="PF12146">
    <property type="entry name" value="Hydrolase_4"/>
    <property type="match status" value="1"/>
</dbReference>
<dbReference type="SUPFAM" id="SSF53474">
    <property type="entry name" value="alpha/beta-Hydrolases"/>
    <property type="match status" value="1"/>
</dbReference>